<proteinExistence type="inferred from homology"/>
<accession>P23997</accession>
<sequence length="498" mass="56056">MASQGTKRSYEQMETDGERQNATEIRASVGKMIGGIGRFYIQMCTELKLNDYEGRLIQNSLTIERMVLSAFDERRNKYLEEHPSAGKDPKKTGGPIYKRVDGKWMRELVLYDKEEIRRIWRQANNGDDATAGLTHMMIWHSNLNDTTYQRTRALVRTGMDPRMCSLMQGSTLPRRSGAAGAAVKGVGTMVLELIRMIKRGINDRNFWRGENGRKTRIAYERMCNILKGKFQTAAQRAMMDQVRESRNPGNAEIEDLTFLARSALILRGSVAHKSCLPACVYGPAVASGYDFEKEGYSLVGIDPFKLLQTSQVYSLIRPNENPAHKSQLVWMACNSAAFEDLRVSSFIRGTKVIPRGKLSTRGVQIASNENMDTMVSSTLELRSRYWAIRTRSGGNTNQQRASAGQISIQPTFSVQRNLPFDKTTIMAAFTGNAEGRTSDMRAEIIKMMESARPEEVSFQGRGVFEFSDERAANPIVPSFDMSNEGSYFFGDNAEEYDN</sequence>
<protein>
    <recommendedName>
        <fullName evidence="1">Nucleoprotein</fullName>
    </recommendedName>
    <alternativeName>
        <fullName evidence="1">Nucleocapsid protein</fullName>
        <shortName evidence="1">Protein N</shortName>
    </alternativeName>
</protein>
<evidence type="ECO:0000255" key="1">
    <source>
        <dbReference type="HAMAP-Rule" id="MF_04070"/>
    </source>
</evidence>
<evidence type="ECO:0000256" key="2">
    <source>
        <dbReference type="SAM" id="MobiDB-lite"/>
    </source>
</evidence>
<dbReference type="EMBL" id="M59334">
    <property type="protein sequence ID" value="AAA43473.1"/>
    <property type="molecule type" value="Genomic_RNA"/>
</dbReference>
<dbReference type="SMR" id="P23997"/>
<dbReference type="GO" id="GO:0019029">
    <property type="term" value="C:helical viral capsid"/>
    <property type="evidence" value="ECO:0007669"/>
    <property type="project" value="UniProtKB-UniRule"/>
</dbReference>
<dbReference type="GO" id="GO:0043657">
    <property type="term" value="C:host cell"/>
    <property type="evidence" value="ECO:0007669"/>
    <property type="project" value="GOC"/>
</dbReference>
<dbReference type="GO" id="GO:0042025">
    <property type="term" value="C:host cell nucleus"/>
    <property type="evidence" value="ECO:0007669"/>
    <property type="project" value="UniProtKB-SubCell"/>
</dbReference>
<dbReference type="GO" id="GO:1990904">
    <property type="term" value="C:ribonucleoprotein complex"/>
    <property type="evidence" value="ECO:0007669"/>
    <property type="project" value="UniProtKB-KW"/>
</dbReference>
<dbReference type="GO" id="GO:0019013">
    <property type="term" value="C:viral nucleocapsid"/>
    <property type="evidence" value="ECO:0007669"/>
    <property type="project" value="UniProtKB-UniRule"/>
</dbReference>
<dbReference type="GO" id="GO:0003723">
    <property type="term" value="F:RNA binding"/>
    <property type="evidence" value="ECO:0007669"/>
    <property type="project" value="UniProtKB-UniRule"/>
</dbReference>
<dbReference type="GO" id="GO:0005198">
    <property type="term" value="F:structural molecule activity"/>
    <property type="evidence" value="ECO:0007669"/>
    <property type="project" value="UniProtKB-UniRule"/>
</dbReference>
<dbReference type="GO" id="GO:0046718">
    <property type="term" value="P:symbiont entry into host cell"/>
    <property type="evidence" value="ECO:0007669"/>
    <property type="project" value="UniProtKB-KW"/>
</dbReference>
<dbReference type="GO" id="GO:0075732">
    <property type="term" value="P:viral penetration into host nucleus"/>
    <property type="evidence" value="ECO:0007669"/>
    <property type="project" value="UniProtKB-UniRule"/>
</dbReference>
<dbReference type="HAMAP" id="MF_04070">
    <property type="entry name" value="INFV_NCAP"/>
    <property type="match status" value="1"/>
</dbReference>
<dbReference type="InterPro" id="IPR002141">
    <property type="entry name" value="Flu_NP"/>
</dbReference>
<dbReference type="Pfam" id="PF00506">
    <property type="entry name" value="Flu_NP"/>
    <property type="match status" value="1"/>
</dbReference>
<dbReference type="SUPFAM" id="SSF161003">
    <property type="entry name" value="flu NP-like"/>
    <property type="match status" value="1"/>
</dbReference>
<reference key="1">
    <citation type="journal article" date="1991" name="J. Virol.">
        <title>Antigenic and genetic variation in influenza A (H1N1) virus isolates recovered from a persistently infected immunodeficient child.</title>
        <authorList>
            <person name="Rocha E."/>
            <person name="Cox N.J."/>
            <person name="Black R.A."/>
            <person name="Harmon M.W."/>
            <person name="Harrison C.J."/>
            <person name="Kendal A.P."/>
        </authorList>
    </citation>
    <scope>NUCLEOTIDE SEQUENCE [GENOMIC RNA]</scope>
</reference>
<organismHost>
    <name type="scientific">Aves</name>
    <dbReference type="NCBI Taxonomy" id="8782"/>
</organismHost>
<organismHost>
    <name type="scientific">Homo sapiens</name>
    <name type="common">Human</name>
    <dbReference type="NCBI Taxonomy" id="9606"/>
</organismHost>
<organismHost>
    <name type="scientific">Sus scrofa</name>
    <name type="common">Pig</name>
    <dbReference type="NCBI Taxonomy" id="9823"/>
</organismHost>
<organism>
    <name type="scientific">Influenza A virus (strain A/Ohio/4/1983 H1N1)</name>
    <dbReference type="NCBI Taxonomy" id="385596"/>
    <lineage>
        <taxon>Viruses</taxon>
        <taxon>Riboviria</taxon>
        <taxon>Orthornavirae</taxon>
        <taxon>Negarnaviricota</taxon>
        <taxon>Polyploviricotina</taxon>
        <taxon>Insthoviricetes</taxon>
        <taxon>Articulavirales</taxon>
        <taxon>Orthomyxoviridae</taxon>
        <taxon>Alphainfluenzavirus</taxon>
        <taxon>Alphainfluenzavirus influenzae</taxon>
        <taxon>Influenza A virus</taxon>
    </lineage>
</organism>
<keyword id="KW-0167">Capsid protein</keyword>
<keyword id="KW-1139">Helical capsid protein</keyword>
<keyword id="KW-1048">Host nucleus</keyword>
<keyword id="KW-0945">Host-virus interaction</keyword>
<keyword id="KW-0687">Ribonucleoprotein</keyword>
<keyword id="KW-0694">RNA-binding</keyword>
<keyword id="KW-0543">Viral nucleoprotein</keyword>
<keyword id="KW-1163">Viral penetration into host nucleus</keyword>
<keyword id="KW-0946">Virion</keyword>
<keyword id="KW-1160">Virus entry into host cell</keyword>
<gene>
    <name evidence="1" type="primary">NP</name>
</gene>
<feature type="chain" id="PRO_0000079090" description="Nucleoprotein">
    <location>
        <begin position="1"/>
        <end position="498"/>
    </location>
</feature>
<feature type="region of interest" description="Disordered" evidence="2">
    <location>
        <begin position="1"/>
        <end position="21"/>
    </location>
</feature>
<feature type="short sequence motif" description="Unconventional nuclear localization signal" evidence="1">
    <location>
        <begin position="1"/>
        <end position="18"/>
    </location>
</feature>
<feature type="short sequence motif" description="Bipartite nuclear localization signal" evidence="1">
    <location>
        <begin position="198"/>
        <end position="216"/>
    </location>
</feature>
<feature type="compositionally biased region" description="Basic and acidic residues" evidence="2">
    <location>
        <begin position="8"/>
        <end position="21"/>
    </location>
</feature>
<name>NCAP_I83A2</name>
<comment type="function">
    <text evidence="1">Encapsidates the negative strand viral RNA, protecting it from nucleases. The encapsidated genomic RNA is termed the ribonucleoprotein (RNP) and serves as template for transcription and replication. The RNP needs to be localized in the host nucleus to start an infectious cycle, but is too large to diffuse through the nuclear pore complex. NP comprises at least 2 nuclear localization signals that are responsible for the active RNP import into the nucleus through cellular importin alpha/beta pathway. Later in the infection, nclear export of RNPs are mediated through viral proteins NEP interacting with M1 which binds nucleoproteins. It is possible that nucleoprotein binds directly host exportin-1/XPO1 and plays an active role in RNPs nuclear export. M1 interaction with RNP seems to hide nucleoprotein's nuclear localization signals. Soon after a virion infects a new cell, M1 dissociates from the RNP under acidification of the virion driven by M2 protein. Dissociation of M1 from RNP unmasks nucleoprotein's nuclear localization signals, targeting the RNP to the nucleus.</text>
</comment>
<comment type="subunit">
    <text evidence="1">Homomultimerizes to form the nucleocapsid. May bind host exportin-1/XPO1. Binds to viral genomic RNA. Protein-RNA contacts are mediated by a combination of electrostatic interactions between positively charged residues and the phosphate backbone and planar interactions between aromatic side chains and bases.</text>
</comment>
<comment type="subcellular location">
    <subcellularLocation>
        <location evidence="1">Virion</location>
    </subcellularLocation>
    <subcellularLocation>
        <location evidence="1">Host nucleus</location>
    </subcellularLocation>
</comment>
<comment type="PTM">
    <text evidence="1">Late in virus-infected cells, may be cleaved from a 56-kDa protein to a 53-kDa protein by a cellular caspase. This cleavage might be a marker for the onset of apoptosis in infected cells or have a specific function in virus host interaction.</text>
</comment>
<comment type="similarity">
    <text evidence="1">Belongs to the influenza viruses nucleoprotein family.</text>
</comment>